<feature type="chain" id="PRO_0000428925" description="Arginine deiminase">
    <location>
        <begin position="1"/>
        <end position="486"/>
    </location>
</feature>
<feature type="active site" description="Amidino-cysteine intermediate" evidence="1">
    <location>
        <position position="476"/>
    </location>
</feature>
<dbReference type="EC" id="3.5.3.6"/>
<dbReference type="EMBL" id="X80931">
    <property type="protein sequence ID" value="CAA56904.1"/>
    <property type="molecule type" value="Genomic_DNA"/>
</dbReference>
<dbReference type="EMBL" id="AM774418">
    <property type="protein sequence ID" value="CAP15556.1"/>
    <property type="molecule type" value="Genomic_DNA"/>
</dbReference>
<dbReference type="PIR" id="T44863">
    <property type="entry name" value="T44863"/>
</dbReference>
<dbReference type="RefSeq" id="WP_010904161.1">
    <property type="nucleotide sequence ID" value="NC_010368.1"/>
</dbReference>
<dbReference type="SMR" id="B0R9X5"/>
<dbReference type="EnsemblBacteria" id="CAP15556">
    <property type="protein sequence ID" value="CAP15556"/>
    <property type="gene ID" value="OE_5208R"/>
</dbReference>
<dbReference type="GeneID" id="68695252"/>
<dbReference type="KEGG" id="hsl:OE_5208R"/>
<dbReference type="HOGENOM" id="CLU_049514_0_0_2"/>
<dbReference type="PhylomeDB" id="B0R9X5"/>
<dbReference type="UniPathway" id="UPA00254">
    <property type="reaction ID" value="UER00364"/>
</dbReference>
<dbReference type="Proteomes" id="UP000001321">
    <property type="component" value="Plasmid PHS3"/>
</dbReference>
<dbReference type="GO" id="GO:0005737">
    <property type="term" value="C:cytoplasm"/>
    <property type="evidence" value="ECO:0007669"/>
    <property type="project" value="UniProtKB-SubCell"/>
</dbReference>
<dbReference type="GO" id="GO:0016990">
    <property type="term" value="F:arginine deiminase activity"/>
    <property type="evidence" value="ECO:0007669"/>
    <property type="project" value="UniProtKB-EC"/>
</dbReference>
<dbReference type="GO" id="GO:0019547">
    <property type="term" value="P:arginine catabolic process to ornithine"/>
    <property type="evidence" value="ECO:0007669"/>
    <property type="project" value="UniProtKB-UniPathway"/>
</dbReference>
<dbReference type="GO" id="GO:0019546">
    <property type="term" value="P:arginine deiminase pathway"/>
    <property type="evidence" value="ECO:0007669"/>
    <property type="project" value="TreeGrafter"/>
</dbReference>
<dbReference type="Gene3D" id="3.75.10.10">
    <property type="entry name" value="L-arginine/glycine Amidinotransferase, Chain A"/>
    <property type="match status" value="1"/>
</dbReference>
<dbReference type="PANTHER" id="PTHR47271">
    <property type="entry name" value="ARGININE DEIMINASE"/>
    <property type="match status" value="1"/>
</dbReference>
<dbReference type="PANTHER" id="PTHR47271:SF2">
    <property type="entry name" value="ARGININE DEIMINASE"/>
    <property type="match status" value="1"/>
</dbReference>
<dbReference type="Pfam" id="PF02274">
    <property type="entry name" value="ADI"/>
    <property type="match status" value="2"/>
</dbReference>
<dbReference type="SUPFAM" id="SSF55909">
    <property type="entry name" value="Pentein"/>
    <property type="match status" value="1"/>
</dbReference>
<keyword id="KW-0056">Arginine metabolism</keyword>
<keyword id="KW-0963">Cytoplasm</keyword>
<keyword id="KW-0903">Direct protein sequencing</keyword>
<keyword id="KW-0378">Hydrolase</keyword>
<keyword id="KW-0614">Plasmid</keyword>
<protein>
    <recommendedName>
        <fullName>Arginine deiminase</fullName>
        <shortName>ADI</shortName>
        <ecNumber>3.5.3.6</ecNumber>
    </recommendedName>
    <alternativeName>
        <fullName>Arginine dihydrolase</fullName>
        <shortName>AD</shortName>
    </alternativeName>
</protein>
<geneLocation type="plasmid">
    <name>PHS3</name>
</geneLocation>
<sequence length="486" mass="54706">MSSESPESVDDSTKVQATAEWDPLQAVRMHLPGAETFVGIMDPEPNLFLNDFSLVDAQQEHLSLSQDLEAALPASNPIHYLHDDLANGNGMNALLSSRVNFDLSELGEDEQVNRRDKMWARLHELSPHTQIQAVLGNAEVIRHHSHSDEEVPGSNPDRWDTTSVQLEQPLTNMYFQRDQQFVTQNGVVLCSMKEDTRKPEVDIARASWEALDGDEFDVDIVADMSQVREHDVTEHVPERDDIQETEVLVEGGDFYPAGEFSLLGVSAKIPEGEAYPKHDIAEDDTEYVHRTTYAAGHRLLMDDAFGSEEVGLVRAPFEAAQAHKDDDNGEVEMDIMHLDTWFNFVDDDLVVAHKELVENTTLDVYARTHGGEKPYTLERPDVNFGEYLREKGFEIVDVYDYVDPSHPDTDMALKAITNFLTVGPRKILPVRFSDDDDGVMKQFIDGIQEDYDVTVIPDGEGRKIINLRAGYGAIHCMTTPLRRTPE</sequence>
<accession>B0R9X5</accession>
<accession>Q48294</accession>
<accession>Q7LY13</accession>
<comment type="function">
    <text evidence="2">Involved in the arginine deiminase pathway of fermentative arginine utilization.</text>
</comment>
<comment type="catalytic activity">
    <reaction>
        <text>L-arginine + H2O = L-citrulline + NH4(+)</text>
        <dbReference type="Rhea" id="RHEA:19597"/>
        <dbReference type="ChEBI" id="CHEBI:15377"/>
        <dbReference type="ChEBI" id="CHEBI:28938"/>
        <dbReference type="ChEBI" id="CHEBI:32682"/>
        <dbReference type="ChEBI" id="CHEBI:57743"/>
        <dbReference type="EC" id="3.5.3.6"/>
    </reaction>
</comment>
<comment type="pathway">
    <text evidence="2">Amino-acid degradation; L-arginine degradation via ADI pathway; carbamoyl phosphate from L-arginine: step 1/2.</text>
</comment>
<comment type="subcellular location">
    <subcellularLocation>
        <location evidence="1">Cytoplasm</location>
    </subcellularLocation>
</comment>
<comment type="induction">
    <text evidence="2">No induction in fermentatively grown cells.</text>
</comment>
<comment type="similarity">
    <text evidence="3">Belongs to the arginine deiminase family.</text>
</comment>
<name>ARCA_HALS3</name>
<organism>
    <name type="scientific">Halobacterium salinarum (strain ATCC 29341 / DSM 671 / R1)</name>
    <dbReference type="NCBI Taxonomy" id="478009"/>
    <lineage>
        <taxon>Archaea</taxon>
        <taxon>Methanobacteriati</taxon>
        <taxon>Methanobacteriota</taxon>
        <taxon>Stenosarchaea group</taxon>
        <taxon>Halobacteria</taxon>
        <taxon>Halobacteriales</taxon>
        <taxon>Halobacteriaceae</taxon>
        <taxon>Halobacterium</taxon>
        <taxon>Halobacterium salinarum NRC-34001</taxon>
    </lineage>
</organism>
<reference key="1">
    <citation type="journal article" date="1996" name="J. Bacteriol.">
        <title>Fermentative arginine degradation in Halobacterium salinarium (formerly Halobacterium halobium): genes, gene products, and transcripts of the arcRACB gene cluster.</title>
        <authorList>
            <person name="Ruepp A."/>
            <person name="Soppa J."/>
        </authorList>
    </citation>
    <scope>NUCLEOTIDE SEQUENCE [GENOMIC DNA]</scope>
    <scope>PROTEIN SEQUENCE OF 376-385; 393-404 AND 442-460</scope>
    <scope>FUNCTION</scope>
    <scope>PATHWAY</scope>
    <scope>INDUCTION</scope>
    <source>
        <strain>R1 / S9 / L33</strain>
    </source>
</reference>
<reference key="2">
    <citation type="journal article" date="2008" name="Genomics">
        <title>Evolution in the laboratory: the genome of Halobacterium salinarum strain R1 compared to that of strain NRC-1.</title>
        <authorList>
            <person name="Pfeiffer F."/>
            <person name="Schuster S.C."/>
            <person name="Broicher A."/>
            <person name="Falb M."/>
            <person name="Palm P."/>
            <person name="Rodewald K."/>
            <person name="Ruepp A."/>
            <person name="Soppa J."/>
            <person name="Tittor J."/>
            <person name="Oesterhelt D."/>
        </authorList>
    </citation>
    <scope>NUCLEOTIDE SEQUENCE [LARGE SCALE GENOMIC DNA]</scope>
    <source>
        <strain>ATCC 29341 / DSM 671 / R1</strain>
        <plasmid>PHS3</plasmid>
    </source>
</reference>
<gene>
    <name type="primary">arcA</name>
    <name type="ordered locus">OE_5208R</name>
</gene>
<evidence type="ECO:0000250" key="1"/>
<evidence type="ECO:0000269" key="2">
    <source>
    </source>
</evidence>
<evidence type="ECO:0000305" key="3"/>
<proteinExistence type="evidence at protein level"/>